<sequence length="234" mass="26485">MNNIDQTELDKFEKMAATWWDPNGSFKPIHLLNPLRLDYIQQKANGLFGKKVLDVGCGGGILSEAMAKAGANVTGIDMTTEPLDVARKHAEESGLTIDYRQTTIEDFVQNQTACHAEKFDVITCMEMLEHVPDPLSIIQSCKALLKPDGVLFFSTINRTLKAYMLVIIGAEYVLKMLPKGTHEFEKFIKPAELLNWCDMANLRCQEMKGYHFNPLTEKFWLNNDVSCNYIAMLK</sequence>
<gene>
    <name evidence="1" type="primary">ubiG</name>
    <name type="ordered locus">APP7_0288</name>
</gene>
<name>UBIG_ACTP7</name>
<protein>
    <recommendedName>
        <fullName evidence="1">Ubiquinone biosynthesis O-methyltransferase</fullName>
    </recommendedName>
    <alternativeName>
        <fullName evidence="1">2-polyprenyl-6-hydroxyphenol methylase</fullName>
        <ecNumber evidence="1">2.1.1.222</ecNumber>
    </alternativeName>
    <alternativeName>
        <fullName evidence="1">3-demethylubiquinone 3-O-methyltransferase</fullName>
        <ecNumber evidence="1">2.1.1.64</ecNumber>
    </alternativeName>
</protein>
<proteinExistence type="inferred from homology"/>
<comment type="function">
    <text evidence="1">O-methyltransferase that catalyzes the 2 O-methylation steps in the ubiquinone biosynthetic pathway.</text>
</comment>
<comment type="catalytic activity">
    <reaction evidence="1">
        <text>a 3-demethylubiquinol + S-adenosyl-L-methionine = a ubiquinol + S-adenosyl-L-homocysteine + H(+)</text>
        <dbReference type="Rhea" id="RHEA:44380"/>
        <dbReference type="Rhea" id="RHEA-COMP:9566"/>
        <dbReference type="Rhea" id="RHEA-COMP:10914"/>
        <dbReference type="ChEBI" id="CHEBI:15378"/>
        <dbReference type="ChEBI" id="CHEBI:17976"/>
        <dbReference type="ChEBI" id="CHEBI:57856"/>
        <dbReference type="ChEBI" id="CHEBI:59789"/>
        <dbReference type="ChEBI" id="CHEBI:84422"/>
        <dbReference type="EC" id="2.1.1.64"/>
    </reaction>
</comment>
<comment type="catalytic activity">
    <reaction evidence="1">
        <text>a 3-(all-trans-polyprenyl)benzene-1,2-diol + S-adenosyl-L-methionine = a 2-methoxy-6-(all-trans-polyprenyl)phenol + S-adenosyl-L-homocysteine + H(+)</text>
        <dbReference type="Rhea" id="RHEA:31411"/>
        <dbReference type="Rhea" id="RHEA-COMP:9550"/>
        <dbReference type="Rhea" id="RHEA-COMP:9551"/>
        <dbReference type="ChEBI" id="CHEBI:15378"/>
        <dbReference type="ChEBI" id="CHEBI:57856"/>
        <dbReference type="ChEBI" id="CHEBI:59789"/>
        <dbReference type="ChEBI" id="CHEBI:62729"/>
        <dbReference type="ChEBI" id="CHEBI:62731"/>
        <dbReference type="EC" id="2.1.1.222"/>
    </reaction>
</comment>
<comment type="pathway">
    <text evidence="1">Cofactor biosynthesis; ubiquinone biosynthesis.</text>
</comment>
<comment type="similarity">
    <text evidence="1">Belongs to the methyltransferase superfamily. UbiG/COQ3 family.</text>
</comment>
<evidence type="ECO:0000255" key="1">
    <source>
        <dbReference type="HAMAP-Rule" id="MF_00472"/>
    </source>
</evidence>
<accession>B3H0C8</accession>
<keyword id="KW-0489">Methyltransferase</keyword>
<keyword id="KW-0949">S-adenosyl-L-methionine</keyword>
<keyword id="KW-0808">Transferase</keyword>
<keyword id="KW-0831">Ubiquinone biosynthesis</keyword>
<reference key="1">
    <citation type="submission" date="2008-06" db="EMBL/GenBank/DDBJ databases">
        <title>Genome and proteome analysis of A. pleuropneumoniae serotype 7.</title>
        <authorList>
            <person name="Linke B."/>
            <person name="Buettner F."/>
            <person name="Martinez-Arias R."/>
            <person name="Goesmann A."/>
            <person name="Baltes N."/>
            <person name="Tegetmeyer H."/>
            <person name="Singh M."/>
            <person name="Gerlach G.F."/>
        </authorList>
    </citation>
    <scope>NUCLEOTIDE SEQUENCE [LARGE SCALE GENOMIC DNA]</scope>
    <source>
        <strain>AP76</strain>
    </source>
</reference>
<feature type="chain" id="PRO_1000199667" description="Ubiquinone biosynthesis O-methyltransferase">
    <location>
        <begin position="1"/>
        <end position="234"/>
    </location>
</feature>
<feature type="binding site" evidence="1">
    <location>
        <position position="36"/>
    </location>
    <ligand>
        <name>S-adenosyl-L-methionine</name>
        <dbReference type="ChEBI" id="CHEBI:59789"/>
    </ligand>
</feature>
<feature type="binding site" evidence="1">
    <location>
        <position position="56"/>
    </location>
    <ligand>
        <name>S-adenosyl-L-methionine</name>
        <dbReference type="ChEBI" id="CHEBI:59789"/>
    </ligand>
</feature>
<feature type="binding site" evidence="1">
    <location>
        <position position="77"/>
    </location>
    <ligand>
        <name>S-adenosyl-L-methionine</name>
        <dbReference type="ChEBI" id="CHEBI:59789"/>
    </ligand>
</feature>
<feature type="binding site" evidence="1">
    <location>
        <position position="125"/>
    </location>
    <ligand>
        <name>S-adenosyl-L-methionine</name>
        <dbReference type="ChEBI" id="CHEBI:59789"/>
    </ligand>
</feature>
<organism>
    <name type="scientific">Actinobacillus pleuropneumoniae serotype 7 (strain AP76)</name>
    <dbReference type="NCBI Taxonomy" id="537457"/>
    <lineage>
        <taxon>Bacteria</taxon>
        <taxon>Pseudomonadati</taxon>
        <taxon>Pseudomonadota</taxon>
        <taxon>Gammaproteobacteria</taxon>
        <taxon>Pasteurellales</taxon>
        <taxon>Pasteurellaceae</taxon>
        <taxon>Actinobacillus</taxon>
    </lineage>
</organism>
<dbReference type="EC" id="2.1.1.222" evidence="1"/>
<dbReference type="EC" id="2.1.1.64" evidence="1"/>
<dbReference type="EMBL" id="CP001091">
    <property type="protein sequence ID" value="ACE60940.1"/>
    <property type="molecule type" value="Genomic_DNA"/>
</dbReference>
<dbReference type="RefSeq" id="WP_005616730.1">
    <property type="nucleotide sequence ID" value="NC_010939.1"/>
</dbReference>
<dbReference type="SMR" id="B3H0C8"/>
<dbReference type="KEGG" id="apa:APP7_0288"/>
<dbReference type="HOGENOM" id="CLU_042432_5_0_6"/>
<dbReference type="UniPathway" id="UPA00232"/>
<dbReference type="Proteomes" id="UP000001226">
    <property type="component" value="Chromosome"/>
</dbReference>
<dbReference type="GO" id="GO:0102208">
    <property type="term" value="F:2-polyprenyl-6-hydroxyphenol methylase activity"/>
    <property type="evidence" value="ECO:0007669"/>
    <property type="project" value="UniProtKB-EC"/>
</dbReference>
<dbReference type="GO" id="GO:0061542">
    <property type="term" value="F:3-demethylubiquinol 3-O-methyltransferase activity"/>
    <property type="evidence" value="ECO:0007669"/>
    <property type="project" value="UniProtKB-UniRule"/>
</dbReference>
<dbReference type="GO" id="GO:0010420">
    <property type="term" value="F:polyprenyldihydroxybenzoate methyltransferase activity"/>
    <property type="evidence" value="ECO:0007669"/>
    <property type="project" value="InterPro"/>
</dbReference>
<dbReference type="GO" id="GO:0032259">
    <property type="term" value="P:methylation"/>
    <property type="evidence" value="ECO:0007669"/>
    <property type="project" value="UniProtKB-KW"/>
</dbReference>
<dbReference type="CDD" id="cd02440">
    <property type="entry name" value="AdoMet_MTases"/>
    <property type="match status" value="1"/>
</dbReference>
<dbReference type="FunFam" id="3.40.50.150:FF:000028">
    <property type="entry name" value="Ubiquinone biosynthesis O-methyltransferase"/>
    <property type="match status" value="1"/>
</dbReference>
<dbReference type="Gene3D" id="3.40.50.150">
    <property type="entry name" value="Vaccinia Virus protein VP39"/>
    <property type="match status" value="1"/>
</dbReference>
<dbReference type="HAMAP" id="MF_00472">
    <property type="entry name" value="UbiG"/>
    <property type="match status" value="1"/>
</dbReference>
<dbReference type="InterPro" id="IPR029063">
    <property type="entry name" value="SAM-dependent_MTases_sf"/>
</dbReference>
<dbReference type="InterPro" id="IPR010233">
    <property type="entry name" value="UbiG_MeTrfase"/>
</dbReference>
<dbReference type="NCBIfam" id="TIGR01983">
    <property type="entry name" value="UbiG"/>
    <property type="match status" value="1"/>
</dbReference>
<dbReference type="PANTHER" id="PTHR43464">
    <property type="entry name" value="METHYLTRANSFERASE"/>
    <property type="match status" value="1"/>
</dbReference>
<dbReference type="PANTHER" id="PTHR43464:SF19">
    <property type="entry name" value="UBIQUINONE BIOSYNTHESIS O-METHYLTRANSFERASE, MITOCHONDRIAL"/>
    <property type="match status" value="1"/>
</dbReference>
<dbReference type="Pfam" id="PF13489">
    <property type="entry name" value="Methyltransf_23"/>
    <property type="match status" value="1"/>
</dbReference>
<dbReference type="SUPFAM" id="SSF53335">
    <property type="entry name" value="S-adenosyl-L-methionine-dependent methyltransferases"/>
    <property type="match status" value="1"/>
</dbReference>